<name>FLHD_ACISJ</name>
<reference key="1">
    <citation type="submission" date="2006-12" db="EMBL/GenBank/DDBJ databases">
        <title>Complete sequence of chromosome 1 of Acidovorax sp. JS42.</title>
        <authorList>
            <person name="Copeland A."/>
            <person name="Lucas S."/>
            <person name="Lapidus A."/>
            <person name="Barry K."/>
            <person name="Detter J.C."/>
            <person name="Glavina del Rio T."/>
            <person name="Dalin E."/>
            <person name="Tice H."/>
            <person name="Pitluck S."/>
            <person name="Chertkov O."/>
            <person name="Brettin T."/>
            <person name="Bruce D."/>
            <person name="Han C."/>
            <person name="Tapia R."/>
            <person name="Gilna P."/>
            <person name="Schmutz J."/>
            <person name="Larimer F."/>
            <person name="Land M."/>
            <person name="Hauser L."/>
            <person name="Kyrpides N."/>
            <person name="Kim E."/>
            <person name="Stahl D."/>
            <person name="Richardson P."/>
        </authorList>
    </citation>
    <scope>NUCLEOTIDE SEQUENCE [LARGE SCALE GENOMIC DNA]</scope>
    <source>
        <strain>JS42</strain>
    </source>
</reference>
<evidence type="ECO:0000255" key="1">
    <source>
        <dbReference type="HAMAP-Rule" id="MF_00725"/>
    </source>
</evidence>
<comment type="function">
    <text evidence="1">Functions in complex with FlhC as a master transcriptional regulator that regulates transcription of several flagellar and non-flagellar operons by binding to their promoter region. Activates expression of class 2 flagellar genes, including fliA, which is a flagellum-specific sigma factor that turns on the class 3 genes. Also regulates genes whose products function in a variety of physiological pathways.</text>
</comment>
<comment type="subunit">
    <text evidence="1">Homodimer; disulfide-linked. Forms a heterohexamer composed of two FlhC and four FlhD subunits. Each FlhC binds a FlhD dimer, forming a heterotrimer, and a hexamer assembles by dimerization of two heterotrimers.</text>
</comment>
<comment type="subcellular location">
    <subcellularLocation>
        <location evidence="1">Cytoplasm</location>
    </subcellularLocation>
</comment>
<comment type="domain">
    <text evidence="1">The C-terminal region contains a putative helix-turn-helix (HTH) motif, suggesting that this region may bind DNA.</text>
</comment>
<comment type="similarity">
    <text evidence="1">Belongs to the FlhD family.</text>
</comment>
<feature type="chain" id="PRO_0000406769" description="Flagellar transcriptional regulator FlhD">
    <location>
        <begin position="1"/>
        <end position="109"/>
    </location>
</feature>
<feature type="disulfide bond" description="Interchain" evidence="1">
    <location>
        <position position="65"/>
    </location>
</feature>
<proteinExistence type="inferred from homology"/>
<accession>A1W9V0</accession>
<keyword id="KW-0010">Activator</keyword>
<keyword id="KW-1005">Bacterial flagellum biogenesis</keyword>
<keyword id="KW-0963">Cytoplasm</keyword>
<keyword id="KW-1015">Disulfide bond</keyword>
<keyword id="KW-0238">DNA-binding</keyword>
<keyword id="KW-0804">Transcription</keyword>
<keyword id="KW-0805">Transcription regulation</keyword>
<sequence length="109" mass="12012">MTSEQLLAEIREANLTYLMLAQTLIRQDKAEAVFRLGLNEEAADILASLSAAQVLKLASRNTLLCSFRVDDELVWSLLTSHNTPRKAASEATNTLHANILMASRVSEVL</sequence>
<dbReference type="EMBL" id="CP000539">
    <property type="protein sequence ID" value="ABM43025.1"/>
    <property type="molecule type" value="Genomic_DNA"/>
</dbReference>
<dbReference type="SMR" id="A1W9V0"/>
<dbReference type="STRING" id="232721.Ajs_2884"/>
<dbReference type="KEGG" id="ajs:Ajs_2884"/>
<dbReference type="eggNOG" id="ENOG5031P80">
    <property type="taxonomic scope" value="Bacteria"/>
</dbReference>
<dbReference type="HOGENOM" id="CLU_144160_1_0_4"/>
<dbReference type="Proteomes" id="UP000000645">
    <property type="component" value="Chromosome"/>
</dbReference>
<dbReference type="GO" id="GO:0005737">
    <property type="term" value="C:cytoplasm"/>
    <property type="evidence" value="ECO:0007669"/>
    <property type="project" value="UniProtKB-SubCell"/>
</dbReference>
<dbReference type="GO" id="GO:0003677">
    <property type="term" value="F:DNA binding"/>
    <property type="evidence" value="ECO:0007669"/>
    <property type="project" value="UniProtKB-UniRule"/>
</dbReference>
<dbReference type="GO" id="GO:0044780">
    <property type="term" value="P:bacterial-type flagellum assembly"/>
    <property type="evidence" value="ECO:0007669"/>
    <property type="project" value="InterPro"/>
</dbReference>
<dbReference type="GO" id="GO:0045893">
    <property type="term" value="P:positive regulation of DNA-templated transcription"/>
    <property type="evidence" value="ECO:0007669"/>
    <property type="project" value="InterPro"/>
</dbReference>
<dbReference type="GO" id="GO:1902208">
    <property type="term" value="P:regulation of bacterial-type flagellum assembly"/>
    <property type="evidence" value="ECO:0007669"/>
    <property type="project" value="UniProtKB-UniRule"/>
</dbReference>
<dbReference type="Gene3D" id="1.10.4000.10">
    <property type="entry name" value="Flagellar transcriptional activator FlhD"/>
    <property type="match status" value="1"/>
</dbReference>
<dbReference type="HAMAP" id="MF_00725">
    <property type="entry name" value="FlhD"/>
    <property type="match status" value="1"/>
</dbReference>
<dbReference type="InterPro" id="IPR023559">
    <property type="entry name" value="Flagellar_FlhD"/>
</dbReference>
<dbReference type="InterPro" id="IPR036194">
    <property type="entry name" value="FlhD_sf"/>
</dbReference>
<dbReference type="NCBIfam" id="NF002783">
    <property type="entry name" value="PRK02909.1-1"/>
    <property type="match status" value="1"/>
</dbReference>
<dbReference type="Pfam" id="PF05247">
    <property type="entry name" value="FlhD"/>
    <property type="match status" value="1"/>
</dbReference>
<dbReference type="SUPFAM" id="SSF63592">
    <property type="entry name" value="Flagellar transcriptional activator FlhD"/>
    <property type="match status" value="1"/>
</dbReference>
<protein>
    <recommendedName>
        <fullName evidence="1">Flagellar transcriptional regulator FlhD</fullName>
    </recommendedName>
</protein>
<organism>
    <name type="scientific">Acidovorax sp. (strain JS42)</name>
    <dbReference type="NCBI Taxonomy" id="232721"/>
    <lineage>
        <taxon>Bacteria</taxon>
        <taxon>Pseudomonadati</taxon>
        <taxon>Pseudomonadota</taxon>
        <taxon>Betaproteobacteria</taxon>
        <taxon>Burkholderiales</taxon>
        <taxon>Comamonadaceae</taxon>
        <taxon>Acidovorax</taxon>
    </lineage>
</organism>
<gene>
    <name evidence="1" type="primary">flhD</name>
    <name type="ordered locus">Ajs_2884</name>
</gene>